<evidence type="ECO:0000255" key="1">
    <source>
        <dbReference type="HAMAP-Rule" id="MF_01368"/>
    </source>
</evidence>
<evidence type="ECO:0000256" key="2">
    <source>
        <dbReference type="SAM" id="MobiDB-lite"/>
    </source>
</evidence>
<evidence type="ECO:0000305" key="3"/>
<protein>
    <recommendedName>
        <fullName evidence="1">Large ribosomal subunit protein bL17</fullName>
    </recommendedName>
    <alternativeName>
        <fullName evidence="3">50S ribosomal protein L17</fullName>
    </alternativeName>
</protein>
<comment type="subunit">
    <text evidence="1">Part of the 50S ribosomal subunit. Contacts protein L32.</text>
</comment>
<comment type="similarity">
    <text evidence="1">Belongs to the bacterial ribosomal protein bL17 family.</text>
</comment>
<sequence length="183" mass="19956">MPTPTKGARLGGSPSHERLMLANLATSLFEHGKITTTEAKAKRLRPLAERLITKAKKGDLHNRREVMKTIRDKDVVHKLFAEIGPHFADRNGGYTRIVKAMPRRGDNAKMAVIALVTEKTVTAEAEAARGTKFAKDEKAKAEATEAKAEETTETTESTEAESTEAPAEEAKAEDTAAEKKDES</sequence>
<name>RL17_SACEN</name>
<gene>
    <name evidence="1" type="primary">rplQ</name>
    <name type="ordered locus">SACE_6802</name>
</gene>
<keyword id="KW-1185">Reference proteome</keyword>
<keyword id="KW-0687">Ribonucleoprotein</keyword>
<keyword id="KW-0689">Ribosomal protein</keyword>
<proteinExistence type="inferred from homology"/>
<organism>
    <name type="scientific">Saccharopolyspora erythraea (strain ATCC 11635 / DSM 40517 / JCM 4748 / NBRC 13426 / NCIMB 8594 / NRRL 2338)</name>
    <dbReference type="NCBI Taxonomy" id="405948"/>
    <lineage>
        <taxon>Bacteria</taxon>
        <taxon>Bacillati</taxon>
        <taxon>Actinomycetota</taxon>
        <taxon>Actinomycetes</taxon>
        <taxon>Pseudonocardiales</taxon>
        <taxon>Pseudonocardiaceae</taxon>
        <taxon>Saccharopolyspora</taxon>
    </lineage>
</organism>
<reference key="1">
    <citation type="journal article" date="2007" name="Nat. Biotechnol.">
        <title>Complete genome sequence of the erythromycin-producing bacterium Saccharopolyspora erythraea NRRL23338.</title>
        <authorList>
            <person name="Oliynyk M."/>
            <person name="Samborskyy M."/>
            <person name="Lester J.B."/>
            <person name="Mironenko T."/>
            <person name="Scott N."/>
            <person name="Dickens S."/>
            <person name="Haydock S.F."/>
            <person name="Leadlay P.F."/>
        </authorList>
    </citation>
    <scope>NUCLEOTIDE SEQUENCE [LARGE SCALE GENOMIC DNA]</scope>
    <source>
        <strain>ATCC 11635 / DSM 40517 / JCM 4748 / NBRC 13426 / NCIMB 8594 / NRRL 2338</strain>
    </source>
</reference>
<feature type="chain" id="PRO_1000055935" description="Large ribosomal subunit protein bL17">
    <location>
        <begin position="1"/>
        <end position="183"/>
    </location>
</feature>
<feature type="region of interest" description="Disordered" evidence="2">
    <location>
        <begin position="130"/>
        <end position="183"/>
    </location>
</feature>
<feature type="compositionally biased region" description="Basic and acidic residues" evidence="2">
    <location>
        <begin position="130"/>
        <end position="150"/>
    </location>
</feature>
<feature type="compositionally biased region" description="Acidic residues" evidence="2">
    <location>
        <begin position="151"/>
        <end position="162"/>
    </location>
</feature>
<feature type="compositionally biased region" description="Basic and acidic residues" evidence="2">
    <location>
        <begin position="168"/>
        <end position="183"/>
    </location>
</feature>
<dbReference type="EMBL" id="AM420293">
    <property type="protein sequence ID" value="CAM05966.1"/>
    <property type="molecule type" value="Genomic_DNA"/>
</dbReference>
<dbReference type="RefSeq" id="WP_009948672.1">
    <property type="nucleotide sequence ID" value="NC_009142.1"/>
</dbReference>
<dbReference type="SMR" id="A4FPJ1"/>
<dbReference type="STRING" id="405948.SACE_6802"/>
<dbReference type="KEGG" id="sen:SACE_6802"/>
<dbReference type="eggNOG" id="COG0203">
    <property type="taxonomic scope" value="Bacteria"/>
</dbReference>
<dbReference type="HOGENOM" id="CLU_074407_0_0_11"/>
<dbReference type="OrthoDB" id="9809073at2"/>
<dbReference type="Proteomes" id="UP000006728">
    <property type="component" value="Chromosome"/>
</dbReference>
<dbReference type="GO" id="GO:0022625">
    <property type="term" value="C:cytosolic large ribosomal subunit"/>
    <property type="evidence" value="ECO:0007669"/>
    <property type="project" value="TreeGrafter"/>
</dbReference>
<dbReference type="GO" id="GO:0003735">
    <property type="term" value="F:structural constituent of ribosome"/>
    <property type="evidence" value="ECO:0007669"/>
    <property type="project" value="InterPro"/>
</dbReference>
<dbReference type="GO" id="GO:0006412">
    <property type="term" value="P:translation"/>
    <property type="evidence" value="ECO:0007669"/>
    <property type="project" value="UniProtKB-UniRule"/>
</dbReference>
<dbReference type="FunFam" id="3.90.1030.10:FF:000001">
    <property type="entry name" value="50S ribosomal protein L17"/>
    <property type="match status" value="1"/>
</dbReference>
<dbReference type="Gene3D" id="3.90.1030.10">
    <property type="entry name" value="Ribosomal protein L17"/>
    <property type="match status" value="1"/>
</dbReference>
<dbReference type="HAMAP" id="MF_01368">
    <property type="entry name" value="Ribosomal_bL17"/>
    <property type="match status" value="1"/>
</dbReference>
<dbReference type="InterPro" id="IPR000456">
    <property type="entry name" value="Ribosomal_bL17"/>
</dbReference>
<dbReference type="InterPro" id="IPR047859">
    <property type="entry name" value="Ribosomal_bL17_CS"/>
</dbReference>
<dbReference type="InterPro" id="IPR036373">
    <property type="entry name" value="Ribosomal_bL17_sf"/>
</dbReference>
<dbReference type="NCBIfam" id="TIGR00059">
    <property type="entry name" value="L17"/>
    <property type="match status" value="1"/>
</dbReference>
<dbReference type="PANTHER" id="PTHR14413:SF16">
    <property type="entry name" value="LARGE RIBOSOMAL SUBUNIT PROTEIN BL17M"/>
    <property type="match status" value="1"/>
</dbReference>
<dbReference type="PANTHER" id="PTHR14413">
    <property type="entry name" value="RIBOSOMAL PROTEIN L17"/>
    <property type="match status" value="1"/>
</dbReference>
<dbReference type="Pfam" id="PF01196">
    <property type="entry name" value="Ribosomal_L17"/>
    <property type="match status" value="1"/>
</dbReference>
<dbReference type="SUPFAM" id="SSF64263">
    <property type="entry name" value="Prokaryotic ribosomal protein L17"/>
    <property type="match status" value="1"/>
</dbReference>
<dbReference type="PROSITE" id="PS01167">
    <property type="entry name" value="RIBOSOMAL_L17"/>
    <property type="match status" value="1"/>
</dbReference>
<accession>A4FPJ1</accession>